<proteinExistence type="inferred from homology"/>
<protein>
    <recommendedName>
        <fullName evidence="1">Multifunctional CCA protein</fullName>
    </recommendedName>
    <domain>
        <recommendedName>
            <fullName evidence="1">CCA-adding enzyme</fullName>
            <ecNumber evidence="1">2.7.7.72</ecNumber>
        </recommendedName>
        <alternativeName>
            <fullName evidence="1">CCA tRNA nucleotidyltransferase</fullName>
        </alternativeName>
        <alternativeName>
            <fullName evidence="1">tRNA CCA-pyrophosphorylase</fullName>
        </alternativeName>
        <alternativeName>
            <fullName evidence="1">tRNA adenylyl-/cytidylyl-transferase</fullName>
        </alternativeName>
        <alternativeName>
            <fullName evidence="1">tRNA nucleotidyltransferase</fullName>
        </alternativeName>
        <alternativeName>
            <fullName evidence="1">tRNA-NT</fullName>
        </alternativeName>
    </domain>
    <domain>
        <recommendedName>
            <fullName evidence="1">2'-nucleotidase</fullName>
            <ecNumber evidence="1">3.1.3.-</ecNumber>
        </recommendedName>
    </domain>
    <domain>
        <recommendedName>
            <fullName evidence="1">2',3'-cyclic phosphodiesterase</fullName>
            <ecNumber evidence="1">3.1.4.-</ecNumber>
        </recommendedName>
    </domain>
    <domain>
        <recommendedName>
            <fullName evidence="1">Phosphatase</fullName>
            <ecNumber evidence="1">3.1.3.-</ecNumber>
        </recommendedName>
    </domain>
</protein>
<name>CCA_SHIDS</name>
<sequence length="412" mass="46548">MKIYLVGGAVRDALLGLPVKDRDWVVVGSTPQEMLDAGYHQVGRDFPVFLHPQTHEEYALARTERKSGSGYTGFTCYAAPDVTLEDDLKRRDLTINALAQDDNGEIIDPYNGLGDLQNRLLRHVSPAFGEDPLRVLRVARFAARYAHLVFRIADETLTLMREMTHAGELEHLTPERVWKETESALTTRNPQVFFQVLRDCGALRVLFPEIDALFGVPAPAKWHPEIDTGIHTLMTLSMAAMLSPQVDVRFATLCHDLGKGLTPPELWPRHHGHGPAGVKLVEQLCQRLRVPNEIRDLARLVAEFHDLIHTFPMLNPKTIVKLFDSIDAWRKPQRVEQLALTSEADVRGRTGFESADYPQGRWLREAWEVAQSVPTKAVVEAGFKGVEIREELTRRRIAAVASWKEQRCPKPE</sequence>
<gene>
    <name evidence="1" type="primary">cca</name>
    <name type="ordered locus">SDY_3239</name>
</gene>
<evidence type="ECO:0000255" key="1">
    <source>
        <dbReference type="HAMAP-Rule" id="MF_01261"/>
    </source>
</evidence>
<organism>
    <name type="scientific">Shigella dysenteriae serotype 1 (strain Sd197)</name>
    <dbReference type="NCBI Taxonomy" id="300267"/>
    <lineage>
        <taxon>Bacteria</taxon>
        <taxon>Pseudomonadati</taxon>
        <taxon>Pseudomonadota</taxon>
        <taxon>Gammaproteobacteria</taxon>
        <taxon>Enterobacterales</taxon>
        <taxon>Enterobacteriaceae</taxon>
        <taxon>Shigella</taxon>
    </lineage>
</organism>
<feature type="chain" id="PRO_1000054300" description="Multifunctional CCA protein">
    <location>
        <begin position="1"/>
        <end position="412"/>
    </location>
</feature>
<feature type="domain" description="HD" evidence="1">
    <location>
        <begin position="228"/>
        <end position="329"/>
    </location>
</feature>
<feature type="binding site" evidence="1">
    <location>
        <position position="8"/>
    </location>
    <ligand>
        <name>ATP</name>
        <dbReference type="ChEBI" id="CHEBI:30616"/>
    </ligand>
</feature>
<feature type="binding site" evidence="1">
    <location>
        <position position="8"/>
    </location>
    <ligand>
        <name>CTP</name>
        <dbReference type="ChEBI" id="CHEBI:37563"/>
    </ligand>
</feature>
<feature type="binding site" evidence="1">
    <location>
        <position position="11"/>
    </location>
    <ligand>
        <name>ATP</name>
        <dbReference type="ChEBI" id="CHEBI:30616"/>
    </ligand>
</feature>
<feature type="binding site" evidence="1">
    <location>
        <position position="11"/>
    </location>
    <ligand>
        <name>CTP</name>
        <dbReference type="ChEBI" id="CHEBI:37563"/>
    </ligand>
</feature>
<feature type="binding site" evidence="1">
    <location>
        <position position="21"/>
    </location>
    <ligand>
        <name>Mg(2+)</name>
        <dbReference type="ChEBI" id="CHEBI:18420"/>
    </ligand>
</feature>
<feature type="binding site" evidence="1">
    <location>
        <position position="23"/>
    </location>
    <ligand>
        <name>Mg(2+)</name>
        <dbReference type="ChEBI" id="CHEBI:18420"/>
    </ligand>
</feature>
<feature type="binding site" evidence="1">
    <location>
        <position position="91"/>
    </location>
    <ligand>
        <name>ATP</name>
        <dbReference type="ChEBI" id="CHEBI:30616"/>
    </ligand>
</feature>
<feature type="binding site" evidence="1">
    <location>
        <position position="91"/>
    </location>
    <ligand>
        <name>CTP</name>
        <dbReference type="ChEBI" id="CHEBI:37563"/>
    </ligand>
</feature>
<feature type="binding site" evidence="1">
    <location>
        <position position="137"/>
    </location>
    <ligand>
        <name>ATP</name>
        <dbReference type="ChEBI" id="CHEBI:30616"/>
    </ligand>
</feature>
<feature type="binding site" evidence="1">
    <location>
        <position position="137"/>
    </location>
    <ligand>
        <name>CTP</name>
        <dbReference type="ChEBI" id="CHEBI:37563"/>
    </ligand>
</feature>
<feature type="binding site" evidence="1">
    <location>
        <position position="140"/>
    </location>
    <ligand>
        <name>ATP</name>
        <dbReference type="ChEBI" id="CHEBI:30616"/>
    </ligand>
</feature>
<feature type="binding site" evidence="1">
    <location>
        <position position="140"/>
    </location>
    <ligand>
        <name>CTP</name>
        <dbReference type="ChEBI" id="CHEBI:37563"/>
    </ligand>
</feature>
<dbReference type="EC" id="2.7.7.72" evidence="1"/>
<dbReference type="EC" id="3.1.3.-" evidence="1"/>
<dbReference type="EC" id="3.1.4.-" evidence="1"/>
<dbReference type="EMBL" id="CP000034">
    <property type="protein sequence ID" value="ABB63247.1"/>
    <property type="molecule type" value="Genomic_DNA"/>
</dbReference>
<dbReference type="RefSeq" id="WP_000708467.1">
    <property type="nucleotide sequence ID" value="NC_007606.1"/>
</dbReference>
<dbReference type="RefSeq" id="YP_404738.1">
    <property type="nucleotide sequence ID" value="NC_007606.1"/>
</dbReference>
<dbReference type="SMR" id="Q32BQ8"/>
<dbReference type="STRING" id="300267.SDY_3239"/>
<dbReference type="EnsemblBacteria" id="ABB63247">
    <property type="protein sequence ID" value="ABB63247"/>
    <property type="gene ID" value="SDY_3239"/>
</dbReference>
<dbReference type="KEGG" id="sdy:SDY_3239"/>
<dbReference type="PATRIC" id="fig|300267.13.peg.3868"/>
<dbReference type="HOGENOM" id="CLU_015961_1_1_6"/>
<dbReference type="Proteomes" id="UP000002716">
    <property type="component" value="Chromosome"/>
</dbReference>
<dbReference type="GO" id="GO:0005524">
    <property type="term" value="F:ATP binding"/>
    <property type="evidence" value="ECO:0007669"/>
    <property type="project" value="UniProtKB-UniRule"/>
</dbReference>
<dbReference type="GO" id="GO:0004810">
    <property type="term" value="F:CCA tRNA nucleotidyltransferase activity"/>
    <property type="evidence" value="ECO:0007669"/>
    <property type="project" value="UniProtKB-UniRule"/>
</dbReference>
<dbReference type="GO" id="GO:0004112">
    <property type="term" value="F:cyclic-nucleotide phosphodiesterase activity"/>
    <property type="evidence" value="ECO:0007669"/>
    <property type="project" value="UniProtKB-UniRule"/>
</dbReference>
<dbReference type="GO" id="GO:0000287">
    <property type="term" value="F:magnesium ion binding"/>
    <property type="evidence" value="ECO:0007669"/>
    <property type="project" value="UniProtKB-UniRule"/>
</dbReference>
<dbReference type="GO" id="GO:0016791">
    <property type="term" value="F:phosphatase activity"/>
    <property type="evidence" value="ECO:0007669"/>
    <property type="project" value="UniProtKB-UniRule"/>
</dbReference>
<dbReference type="GO" id="GO:0000049">
    <property type="term" value="F:tRNA binding"/>
    <property type="evidence" value="ECO:0007669"/>
    <property type="project" value="UniProtKB-UniRule"/>
</dbReference>
<dbReference type="GO" id="GO:0042245">
    <property type="term" value="P:RNA repair"/>
    <property type="evidence" value="ECO:0007669"/>
    <property type="project" value="UniProtKB-KW"/>
</dbReference>
<dbReference type="GO" id="GO:0001680">
    <property type="term" value="P:tRNA 3'-terminal CCA addition"/>
    <property type="evidence" value="ECO:0007669"/>
    <property type="project" value="UniProtKB-UniRule"/>
</dbReference>
<dbReference type="CDD" id="cd00077">
    <property type="entry name" value="HDc"/>
    <property type="match status" value="1"/>
</dbReference>
<dbReference type="CDD" id="cd05398">
    <property type="entry name" value="NT_ClassII-CCAase"/>
    <property type="match status" value="1"/>
</dbReference>
<dbReference type="FunFam" id="1.10.3090.10:FF:000001">
    <property type="entry name" value="Multifunctional CCA protein"/>
    <property type="match status" value="1"/>
</dbReference>
<dbReference type="FunFam" id="3.30.460.10:FF:000016">
    <property type="entry name" value="Multifunctional CCA protein"/>
    <property type="match status" value="1"/>
</dbReference>
<dbReference type="Gene3D" id="3.30.460.10">
    <property type="entry name" value="Beta Polymerase, domain 2"/>
    <property type="match status" value="1"/>
</dbReference>
<dbReference type="Gene3D" id="1.10.3090.10">
    <property type="entry name" value="cca-adding enzyme, domain 2"/>
    <property type="match status" value="1"/>
</dbReference>
<dbReference type="HAMAP" id="MF_01261">
    <property type="entry name" value="CCA_bact_type1"/>
    <property type="match status" value="1"/>
</dbReference>
<dbReference type="HAMAP" id="MF_01262">
    <property type="entry name" value="CCA_bact_type2"/>
    <property type="match status" value="1"/>
</dbReference>
<dbReference type="InterPro" id="IPR012006">
    <property type="entry name" value="CCA_bact"/>
</dbReference>
<dbReference type="InterPro" id="IPR003607">
    <property type="entry name" value="HD/PDEase_dom"/>
</dbReference>
<dbReference type="InterPro" id="IPR006674">
    <property type="entry name" value="HD_domain"/>
</dbReference>
<dbReference type="InterPro" id="IPR043519">
    <property type="entry name" value="NT_sf"/>
</dbReference>
<dbReference type="InterPro" id="IPR002646">
    <property type="entry name" value="PolA_pol_head_dom"/>
</dbReference>
<dbReference type="InterPro" id="IPR032828">
    <property type="entry name" value="PolyA_RNA-bd"/>
</dbReference>
<dbReference type="InterPro" id="IPR050124">
    <property type="entry name" value="tRNA_CCA-adding_enzyme"/>
</dbReference>
<dbReference type="NCBIfam" id="NF008137">
    <property type="entry name" value="PRK10885.1"/>
    <property type="match status" value="1"/>
</dbReference>
<dbReference type="PANTHER" id="PTHR47545">
    <property type="entry name" value="MULTIFUNCTIONAL CCA PROTEIN"/>
    <property type="match status" value="1"/>
</dbReference>
<dbReference type="PANTHER" id="PTHR47545:SF1">
    <property type="entry name" value="MULTIFUNCTIONAL CCA PROTEIN"/>
    <property type="match status" value="1"/>
</dbReference>
<dbReference type="Pfam" id="PF01966">
    <property type="entry name" value="HD"/>
    <property type="match status" value="1"/>
</dbReference>
<dbReference type="Pfam" id="PF01743">
    <property type="entry name" value="PolyA_pol"/>
    <property type="match status" value="1"/>
</dbReference>
<dbReference type="Pfam" id="PF12627">
    <property type="entry name" value="PolyA_pol_RNAbd"/>
    <property type="match status" value="1"/>
</dbReference>
<dbReference type="PIRSF" id="PIRSF000813">
    <property type="entry name" value="CCA_bact"/>
    <property type="match status" value="1"/>
</dbReference>
<dbReference type="SUPFAM" id="SSF81301">
    <property type="entry name" value="Nucleotidyltransferase"/>
    <property type="match status" value="1"/>
</dbReference>
<dbReference type="SUPFAM" id="SSF81891">
    <property type="entry name" value="Poly A polymerase C-terminal region-like"/>
    <property type="match status" value="1"/>
</dbReference>
<dbReference type="PROSITE" id="PS51831">
    <property type="entry name" value="HD"/>
    <property type="match status" value="1"/>
</dbReference>
<keyword id="KW-0067">ATP-binding</keyword>
<keyword id="KW-0378">Hydrolase</keyword>
<keyword id="KW-0460">Magnesium</keyword>
<keyword id="KW-0479">Metal-binding</keyword>
<keyword id="KW-0511">Multifunctional enzyme</keyword>
<keyword id="KW-0533">Nickel</keyword>
<keyword id="KW-0547">Nucleotide-binding</keyword>
<keyword id="KW-0548">Nucleotidyltransferase</keyword>
<keyword id="KW-1185">Reference proteome</keyword>
<keyword id="KW-0692">RNA repair</keyword>
<keyword id="KW-0694">RNA-binding</keyword>
<keyword id="KW-0808">Transferase</keyword>
<keyword id="KW-0819">tRNA processing</keyword>
<reference key="1">
    <citation type="journal article" date="2005" name="Nucleic Acids Res.">
        <title>Genome dynamics and diversity of Shigella species, the etiologic agents of bacillary dysentery.</title>
        <authorList>
            <person name="Yang F."/>
            <person name="Yang J."/>
            <person name="Zhang X."/>
            <person name="Chen L."/>
            <person name="Jiang Y."/>
            <person name="Yan Y."/>
            <person name="Tang X."/>
            <person name="Wang J."/>
            <person name="Xiong Z."/>
            <person name="Dong J."/>
            <person name="Xue Y."/>
            <person name="Zhu Y."/>
            <person name="Xu X."/>
            <person name="Sun L."/>
            <person name="Chen S."/>
            <person name="Nie H."/>
            <person name="Peng J."/>
            <person name="Xu J."/>
            <person name="Wang Y."/>
            <person name="Yuan Z."/>
            <person name="Wen Y."/>
            <person name="Yao Z."/>
            <person name="Shen Y."/>
            <person name="Qiang B."/>
            <person name="Hou Y."/>
            <person name="Yu J."/>
            <person name="Jin Q."/>
        </authorList>
    </citation>
    <scope>NUCLEOTIDE SEQUENCE [LARGE SCALE GENOMIC DNA]</scope>
    <source>
        <strain>Sd197</strain>
    </source>
</reference>
<comment type="function">
    <text evidence="1">Catalyzes the addition and repair of the essential 3'-terminal CCA sequence in tRNAs without using a nucleic acid template. Adds these three nucleotides in the order of C, C, and A to the tRNA nucleotide-73, using CTP and ATP as substrates and producing inorganic pyrophosphate. tRNA 3'-terminal CCA addition is required both for tRNA processing and repair. Also involved in tRNA surveillance by mediating tandem CCA addition to generate a CCACCA at the 3' terminus of unstable tRNAs. While stable tRNAs receive only 3'-terminal CCA, unstable tRNAs are marked with CCACCA and rapidly degraded.</text>
</comment>
<comment type="catalytic activity">
    <reaction evidence="1">
        <text>a tRNA precursor + 2 CTP + ATP = a tRNA with a 3' CCA end + 3 diphosphate</text>
        <dbReference type="Rhea" id="RHEA:14433"/>
        <dbReference type="Rhea" id="RHEA-COMP:10465"/>
        <dbReference type="Rhea" id="RHEA-COMP:10468"/>
        <dbReference type="ChEBI" id="CHEBI:30616"/>
        <dbReference type="ChEBI" id="CHEBI:33019"/>
        <dbReference type="ChEBI" id="CHEBI:37563"/>
        <dbReference type="ChEBI" id="CHEBI:74896"/>
        <dbReference type="ChEBI" id="CHEBI:83071"/>
        <dbReference type="EC" id="2.7.7.72"/>
    </reaction>
</comment>
<comment type="catalytic activity">
    <reaction evidence="1">
        <text>a tRNA with a 3' CCA end + 2 CTP + ATP = a tRNA with a 3' CCACCA end + 3 diphosphate</text>
        <dbReference type="Rhea" id="RHEA:76235"/>
        <dbReference type="Rhea" id="RHEA-COMP:10468"/>
        <dbReference type="Rhea" id="RHEA-COMP:18655"/>
        <dbReference type="ChEBI" id="CHEBI:30616"/>
        <dbReference type="ChEBI" id="CHEBI:33019"/>
        <dbReference type="ChEBI" id="CHEBI:37563"/>
        <dbReference type="ChEBI" id="CHEBI:83071"/>
        <dbReference type="ChEBI" id="CHEBI:195187"/>
    </reaction>
    <physiologicalReaction direction="left-to-right" evidence="1">
        <dbReference type="Rhea" id="RHEA:76236"/>
    </physiologicalReaction>
</comment>
<comment type="cofactor">
    <cofactor evidence="1">
        <name>Mg(2+)</name>
        <dbReference type="ChEBI" id="CHEBI:18420"/>
    </cofactor>
    <text evidence="1">Magnesium is required for nucleotidyltransferase activity.</text>
</comment>
<comment type="cofactor">
    <cofactor evidence="1">
        <name>Ni(2+)</name>
        <dbReference type="ChEBI" id="CHEBI:49786"/>
    </cofactor>
    <text evidence="1">Nickel for phosphatase activity.</text>
</comment>
<comment type="subunit">
    <text evidence="1">Monomer. Can also form homodimers and oligomers.</text>
</comment>
<comment type="domain">
    <text evidence="1">Comprises two domains: an N-terminal domain containing the nucleotidyltransferase activity and a C-terminal HD domain associated with both phosphodiesterase and phosphatase activities.</text>
</comment>
<comment type="miscellaneous">
    <text evidence="1">A single active site specifically recognizes both ATP and CTP and is responsible for their addition.</text>
</comment>
<comment type="similarity">
    <text evidence="1">Belongs to the tRNA nucleotidyltransferase/poly(A) polymerase family. Bacterial CCA-adding enzyme type 1 subfamily.</text>
</comment>
<accession>Q32BQ8</accession>